<dbReference type="EMBL" id="FN596005">
    <property type="protein sequence ID" value="CCB56782.1"/>
    <property type="molecule type" value="Genomic_DNA"/>
</dbReference>
<dbReference type="EMBL" id="FN597025">
    <property type="status" value="NOT_ANNOTATED_CDS"/>
    <property type="molecule type" value="Genomic_DNA"/>
</dbReference>
<dbReference type="RefSeq" id="XP_002270246.1">
    <property type="nucleotide sequence ID" value="XM_002270210.3"/>
</dbReference>
<dbReference type="SMR" id="F6HQ26"/>
<dbReference type="FunCoup" id="F6HQ26">
    <property type="interactions" value="1635"/>
</dbReference>
<dbReference type="STRING" id="29760.F6HQ26"/>
<dbReference type="PaxDb" id="29760-VIT_07s0104g01170.t01"/>
<dbReference type="EnsemblPlants" id="Vitvi07g00234_t001">
    <property type="protein sequence ID" value="Vitvi07g00234_P001"/>
    <property type="gene ID" value="Vitvi07g00234"/>
</dbReference>
<dbReference type="Gramene" id="Vitvi07g00234_t001">
    <property type="protein sequence ID" value="Vitvi07g00234_P001"/>
    <property type="gene ID" value="Vitvi07g00234"/>
</dbReference>
<dbReference type="eggNOG" id="KOG3454">
    <property type="taxonomic scope" value="Eukaryota"/>
</dbReference>
<dbReference type="HOGENOM" id="CLU_079697_1_0_1"/>
<dbReference type="InParanoid" id="F6HQ26"/>
<dbReference type="OrthoDB" id="76567at2759"/>
<dbReference type="Proteomes" id="UP000009183">
    <property type="component" value="Chromosome 7"/>
</dbReference>
<dbReference type="GO" id="GO:0000243">
    <property type="term" value="C:commitment complex"/>
    <property type="evidence" value="ECO:0007669"/>
    <property type="project" value="UniProtKB-UniRule"/>
</dbReference>
<dbReference type="GO" id="GO:0005685">
    <property type="term" value="C:U1 snRNP"/>
    <property type="evidence" value="ECO:0000318"/>
    <property type="project" value="GO_Central"/>
</dbReference>
<dbReference type="GO" id="GO:0071004">
    <property type="term" value="C:U2-type prespliceosome"/>
    <property type="evidence" value="ECO:0007669"/>
    <property type="project" value="UniProtKB-UniRule"/>
</dbReference>
<dbReference type="GO" id="GO:0003729">
    <property type="term" value="F:mRNA binding"/>
    <property type="evidence" value="ECO:0007669"/>
    <property type="project" value="UniProtKB-UniRule"/>
</dbReference>
<dbReference type="GO" id="GO:0030627">
    <property type="term" value="F:pre-mRNA 5'-splice site binding"/>
    <property type="evidence" value="ECO:0000318"/>
    <property type="project" value="GO_Central"/>
</dbReference>
<dbReference type="GO" id="GO:0030619">
    <property type="term" value="F:U1 snRNA binding"/>
    <property type="evidence" value="ECO:0007669"/>
    <property type="project" value="UniProtKB-UniRule"/>
</dbReference>
<dbReference type="GO" id="GO:0008270">
    <property type="term" value="F:zinc ion binding"/>
    <property type="evidence" value="ECO:0007669"/>
    <property type="project" value="UniProtKB-UniRule"/>
</dbReference>
<dbReference type="GO" id="GO:0000395">
    <property type="term" value="P:mRNA 5'-splice site recognition"/>
    <property type="evidence" value="ECO:0000318"/>
    <property type="project" value="GO_Central"/>
</dbReference>
<dbReference type="GO" id="GO:0000387">
    <property type="term" value="P:spliceosomal snRNP assembly"/>
    <property type="evidence" value="ECO:0007669"/>
    <property type="project" value="UniProtKB-UniRule"/>
</dbReference>
<dbReference type="FunFam" id="3.30.160.60:FF:000059">
    <property type="entry name" value="U1 small nuclear ribonucleoprotein C"/>
    <property type="match status" value="1"/>
</dbReference>
<dbReference type="Gene3D" id="3.30.160.60">
    <property type="entry name" value="Classic Zinc Finger"/>
    <property type="match status" value="1"/>
</dbReference>
<dbReference type="HAMAP" id="MF_03153">
    <property type="entry name" value="U1_C"/>
    <property type="match status" value="1"/>
</dbReference>
<dbReference type="InterPro" id="IPR000690">
    <property type="entry name" value="Matrin/U1-C_Znf_C2H2"/>
</dbReference>
<dbReference type="InterPro" id="IPR003604">
    <property type="entry name" value="Matrin/U1-like-C_Znf_C2H2"/>
</dbReference>
<dbReference type="InterPro" id="IPR013085">
    <property type="entry name" value="U1-CZ_Znf_C2H2"/>
</dbReference>
<dbReference type="InterPro" id="IPR017340">
    <property type="entry name" value="U1_snRNP-C"/>
</dbReference>
<dbReference type="InterPro" id="IPR036236">
    <property type="entry name" value="Znf_C2H2_sf"/>
</dbReference>
<dbReference type="PANTHER" id="PTHR31148">
    <property type="entry name" value="U1 SMALL NUCLEAR RIBONUCLEOPROTEIN C"/>
    <property type="match status" value="1"/>
</dbReference>
<dbReference type="PANTHER" id="PTHR31148:SF1">
    <property type="entry name" value="U1 SMALL NUCLEAR RIBONUCLEOPROTEIN C"/>
    <property type="match status" value="1"/>
</dbReference>
<dbReference type="Pfam" id="PF06220">
    <property type="entry name" value="zf-U1"/>
    <property type="match status" value="1"/>
</dbReference>
<dbReference type="PIRSF" id="PIRSF037969">
    <property type="entry name" value="U1_snRNP-C"/>
    <property type="match status" value="1"/>
</dbReference>
<dbReference type="SMART" id="SM00451">
    <property type="entry name" value="ZnF_U1"/>
    <property type="match status" value="1"/>
</dbReference>
<dbReference type="SUPFAM" id="SSF57667">
    <property type="entry name" value="beta-beta-alpha zinc fingers"/>
    <property type="match status" value="1"/>
</dbReference>
<dbReference type="PROSITE" id="PS50171">
    <property type="entry name" value="ZF_MATRIN"/>
    <property type="match status" value="1"/>
</dbReference>
<accession>F6HQ26</accession>
<sequence>MPRYYCDYCDTYLTHDSPSVRKQHNAGYKHKANVRSYYQQFEEQQTQSLIDQRIKEHLGQTAAFQQVGAAYNQHLVSFPGNPPRPRLPVLPTPGMPVAGSAPLPMNSPLVPGMRPPVLPRPVPGAPGYMPAPGMPSMMAPPGAPSMPMPPLNSLPRPPTMNVPPAVPGSTSTPTSGGAPSMMTQPMYQANPAGPTSGGFDSFNINAQGPEANH</sequence>
<proteinExistence type="inferred from homology"/>
<comment type="function">
    <text evidence="1">Component of the spliceosomal U1 snRNP, which is essential for recognition of the pre-mRNA 5' splice-site and the subsequent assembly of the spliceosome. U1-C is directly involved in initial 5' splice-site recognition for both constitutive and regulated alternative splicing. The interaction with the 5' splice-site seems to precede base-pairing between the pre-mRNA and the U1 snRNA. Stimulates commitment or early (E) complex formation by stabilizing the base pairing of the 5' end of the U1 snRNA and the 5' splice-site region.</text>
</comment>
<comment type="subunit">
    <text evidence="1">U1 snRNP is composed of the 7 core Sm proteins B/B', D1, D2, D3, E, F and G that assemble in a heptameric protein ring on the Sm site of the small nuclear RNA to form the core snRNP, and at least 3 U1 snRNP-specific proteins U1-70K, U1-A and U1-C. U1-C interacts with U1 snRNA and the 5' splice-site region of the pre-mRNA.</text>
</comment>
<comment type="subcellular location">
    <subcellularLocation>
        <location evidence="1">Nucleus</location>
    </subcellularLocation>
</comment>
<comment type="similarity">
    <text evidence="1">Belongs to the U1 small nuclear ribonucleoprotein C family.</text>
</comment>
<keyword id="KW-0479">Metal-binding</keyword>
<keyword id="KW-0539">Nucleus</keyword>
<keyword id="KW-1185">Reference proteome</keyword>
<keyword id="KW-0687">Ribonucleoprotein</keyword>
<keyword id="KW-0694">RNA-binding</keyword>
<keyword id="KW-0862">Zinc</keyword>
<keyword id="KW-0863">Zinc-finger</keyword>
<reference key="1">
    <citation type="journal article" date="2007" name="Nature">
        <title>The grapevine genome sequence suggests ancestral hexaploidization in major angiosperm phyla.</title>
        <authorList>
            <person name="Jaillon O."/>
            <person name="Aury J.-M."/>
            <person name="Noel B."/>
            <person name="Policriti A."/>
            <person name="Clepet C."/>
            <person name="Casagrande A."/>
            <person name="Choisne N."/>
            <person name="Aubourg S."/>
            <person name="Vitulo N."/>
            <person name="Jubin C."/>
            <person name="Vezzi A."/>
            <person name="Legeai F."/>
            <person name="Hugueney P."/>
            <person name="Dasilva C."/>
            <person name="Horner D."/>
            <person name="Mica E."/>
            <person name="Jublot D."/>
            <person name="Poulain J."/>
            <person name="Bruyere C."/>
            <person name="Billault A."/>
            <person name="Segurens B."/>
            <person name="Gouyvenoux M."/>
            <person name="Ugarte E."/>
            <person name="Cattonaro F."/>
            <person name="Anthouard V."/>
            <person name="Vico V."/>
            <person name="Del Fabbro C."/>
            <person name="Alaux M."/>
            <person name="Di Gaspero G."/>
            <person name="Dumas V."/>
            <person name="Felice N."/>
            <person name="Paillard S."/>
            <person name="Juman I."/>
            <person name="Moroldo M."/>
            <person name="Scalabrin S."/>
            <person name="Canaguier A."/>
            <person name="Le Clainche I."/>
            <person name="Malacrida G."/>
            <person name="Durand E."/>
            <person name="Pesole G."/>
            <person name="Laucou V."/>
            <person name="Chatelet P."/>
            <person name="Merdinoglu D."/>
            <person name="Delledonne M."/>
            <person name="Pezzotti M."/>
            <person name="Lecharny A."/>
            <person name="Scarpelli C."/>
            <person name="Artiguenave F."/>
            <person name="Pe M.E."/>
            <person name="Valle G."/>
            <person name="Morgante M."/>
            <person name="Caboche M."/>
            <person name="Adam-Blondon A.-F."/>
            <person name="Weissenbach J."/>
            <person name="Quetier F."/>
            <person name="Wincker P."/>
        </authorList>
    </citation>
    <scope>NUCLEOTIDE SEQUENCE [LARGE SCALE GENOMIC DNA]</scope>
    <source>
        <strain>cv. Pinot noir / PN40024</strain>
    </source>
</reference>
<organism>
    <name type="scientific">Vitis vinifera</name>
    <name type="common">Grape</name>
    <dbReference type="NCBI Taxonomy" id="29760"/>
    <lineage>
        <taxon>Eukaryota</taxon>
        <taxon>Viridiplantae</taxon>
        <taxon>Streptophyta</taxon>
        <taxon>Embryophyta</taxon>
        <taxon>Tracheophyta</taxon>
        <taxon>Spermatophyta</taxon>
        <taxon>Magnoliopsida</taxon>
        <taxon>eudicotyledons</taxon>
        <taxon>Gunneridae</taxon>
        <taxon>Pentapetalae</taxon>
        <taxon>rosids</taxon>
        <taxon>Vitales</taxon>
        <taxon>Vitaceae</taxon>
        <taxon>Viteae</taxon>
        <taxon>Vitis</taxon>
    </lineage>
</organism>
<feature type="chain" id="PRO_0000414272" description="U1 small nuclear ribonucleoprotein C">
    <location>
        <begin position="1"/>
        <end position="213"/>
    </location>
</feature>
<feature type="zinc finger region" description="Matrin-type" evidence="1">
    <location>
        <begin position="4"/>
        <end position="36"/>
    </location>
</feature>
<feature type="region of interest" description="Disordered" evidence="2">
    <location>
        <begin position="143"/>
        <end position="213"/>
    </location>
</feature>
<feature type="compositionally biased region" description="Pro residues" evidence="2">
    <location>
        <begin position="143"/>
        <end position="166"/>
    </location>
</feature>
<feature type="compositionally biased region" description="Low complexity" evidence="2">
    <location>
        <begin position="167"/>
        <end position="180"/>
    </location>
</feature>
<protein>
    <recommendedName>
        <fullName evidence="1">U1 small nuclear ribonucleoprotein C</fullName>
        <shortName evidence="1">U1 snRNP C</shortName>
        <shortName evidence="1">U1-C</shortName>
        <shortName evidence="1">U1C</shortName>
    </recommendedName>
</protein>
<evidence type="ECO:0000255" key="1">
    <source>
        <dbReference type="HAMAP-Rule" id="MF_03153"/>
    </source>
</evidence>
<evidence type="ECO:0000256" key="2">
    <source>
        <dbReference type="SAM" id="MobiDB-lite"/>
    </source>
</evidence>
<name>RU1C_VITVI</name>
<gene>
    <name type="ordered locus">VIT_07s0104g01170</name>
</gene>